<organism>
    <name type="scientific">Candida albicans (strain SC5314 / ATCC MYA-2876)</name>
    <name type="common">Yeast</name>
    <dbReference type="NCBI Taxonomy" id="237561"/>
    <lineage>
        <taxon>Eukaryota</taxon>
        <taxon>Fungi</taxon>
        <taxon>Dikarya</taxon>
        <taxon>Ascomycota</taxon>
        <taxon>Saccharomycotina</taxon>
        <taxon>Pichiomycetes</taxon>
        <taxon>Debaryomycetaceae</taxon>
        <taxon>Candida/Lodderomyces clade</taxon>
        <taxon>Candida</taxon>
    </lineage>
</organism>
<accession>Q59UT5</accession>
<accession>A0A1D8PKX9</accession>
<keyword id="KW-1003">Cell membrane</keyword>
<keyword id="KW-0134">Cell wall</keyword>
<keyword id="KW-1015">Disulfide bond</keyword>
<keyword id="KW-0325">Glycoprotein</keyword>
<keyword id="KW-0336">GPI-anchor</keyword>
<keyword id="KW-0349">Heme</keyword>
<keyword id="KW-0408">Iron</keyword>
<keyword id="KW-0449">Lipoprotein</keyword>
<keyword id="KW-0472">Membrane</keyword>
<keyword id="KW-0479">Metal-binding</keyword>
<keyword id="KW-1185">Reference proteome</keyword>
<keyword id="KW-0964">Secreted</keyword>
<keyword id="KW-0732">Signal</keyword>
<sequence>MHFIFYLILLVSAADYGNFGTYPKVPKTASINGFADPIYDLLPDCAKECVKFSTSNTPCPYWDTGCFCVMPQWAGLVGQCVAQKCKGEDVASARFLATSLCSVVGANTWMMPASISSMLSTAAGDAKEVTTIEGKTAKSWVTAPGSAAGSVVSETGSASETGSSESAQSTTTGSSSTGSSSTDSSSSSSSSPSSSANFAVLQTGGIGSVILGFMMYLLV</sequence>
<dbReference type="EMBL" id="CP017626">
    <property type="protein sequence ID" value="AOW28805.1"/>
    <property type="molecule type" value="Genomic_DNA"/>
</dbReference>
<dbReference type="RefSeq" id="XP_713316.1">
    <property type="nucleotide sequence ID" value="XM_708223.1"/>
</dbReference>
<dbReference type="SMR" id="Q59UT5"/>
<dbReference type="STRING" id="237561.Q59UT5"/>
<dbReference type="EnsemblFungi" id="C4_00120W_A-T">
    <property type="protein sequence ID" value="C4_00120W_A-T-p1"/>
    <property type="gene ID" value="C4_00120W_A"/>
</dbReference>
<dbReference type="GeneID" id="3645006"/>
<dbReference type="KEGG" id="cal:CAALFM_C400120WA"/>
<dbReference type="CGD" id="CAL0000201827">
    <property type="gene designation" value="PGA7"/>
</dbReference>
<dbReference type="VEuPathDB" id="FungiDB:C4_00120W_A"/>
<dbReference type="eggNOG" id="ENOG502SFDE">
    <property type="taxonomic scope" value="Eukaryota"/>
</dbReference>
<dbReference type="HOGENOM" id="CLU_079397_1_0_1"/>
<dbReference type="InParanoid" id="Q59UT5"/>
<dbReference type="OMA" id="NCKGEDV"/>
<dbReference type="OrthoDB" id="2496787at2759"/>
<dbReference type="PHI-base" id="PHI:3333"/>
<dbReference type="PRO" id="PR:Q59UT5"/>
<dbReference type="Proteomes" id="UP000000559">
    <property type="component" value="Chromosome 4"/>
</dbReference>
<dbReference type="GO" id="GO:0009986">
    <property type="term" value="C:cell surface"/>
    <property type="evidence" value="ECO:0000314"/>
    <property type="project" value="CGD"/>
</dbReference>
<dbReference type="GO" id="GO:0005576">
    <property type="term" value="C:extracellular region"/>
    <property type="evidence" value="ECO:0000318"/>
    <property type="project" value="GO_Central"/>
</dbReference>
<dbReference type="GO" id="GO:0005886">
    <property type="term" value="C:plasma membrane"/>
    <property type="evidence" value="ECO:0007669"/>
    <property type="project" value="UniProtKB-SubCell"/>
</dbReference>
<dbReference type="GO" id="GO:0098552">
    <property type="term" value="C:side of membrane"/>
    <property type="evidence" value="ECO:0007669"/>
    <property type="project" value="UniProtKB-KW"/>
</dbReference>
<dbReference type="GO" id="GO:0020037">
    <property type="term" value="F:heme binding"/>
    <property type="evidence" value="ECO:0000314"/>
    <property type="project" value="CGD"/>
</dbReference>
<dbReference type="GO" id="GO:0046872">
    <property type="term" value="F:metal ion binding"/>
    <property type="evidence" value="ECO:0007669"/>
    <property type="project" value="UniProtKB-KW"/>
</dbReference>
<dbReference type="GO" id="GO:0006879">
    <property type="term" value="P:intracellular iron ion homeostasis"/>
    <property type="evidence" value="ECO:0000318"/>
    <property type="project" value="GO_Central"/>
</dbReference>
<dbReference type="GO" id="GO:0044011">
    <property type="term" value="P:single-species biofilm formation on inanimate substrate"/>
    <property type="evidence" value="ECO:0000315"/>
    <property type="project" value="CGD"/>
</dbReference>
<dbReference type="InterPro" id="IPR051735">
    <property type="entry name" value="CFEM_domain"/>
</dbReference>
<dbReference type="InterPro" id="IPR008427">
    <property type="entry name" value="Extracellular_membr_CFEM_dom"/>
</dbReference>
<dbReference type="PANTHER" id="PTHR37928">
    <property type="entry name" value="CFEM DOMAIN PROTEIN (AFU_ORTHOLOGUE AFUA_6G14090)"/>
    <property type="match status" value="1"/>
</dbReference>
<dbReference type="PANTHER" id="PTHR37928:SF2">
    <property type="entry name" value="GPI ANCHORED CFEM DOMAIN PROTEIN (AFU_ORTHOLOGUE AFUA_6G10580)"/>
    <property type="match status" value="1"/>
</dbReference>
<dbReference type="Pfam" id="PF05730">
    <property type="entry name" value="CFEM"/>
    <property type="match status" value="1"/>
</dbReference>
<dbReference type="SMART" id="SM00747">
    <property type="entry name" value="CFEM"/>
    <property type="match status" value="1"/>
</dbReference>
<dbReference type="PROSITE" id="PS52012">
    <property type="entry name" value="CFEM"/>
    <property type="match status" value="1"/>
</dbReference>
<name>PGA7_CANAL</name>
<reference key="1">
    <citation type="journal article" date="2004" name="Proc. Natl. Acad. Sci. U.S.A.">
        <title>The diploid genome sequence of Candida albicans.</title>
        <authorList>
            <person name="Jones T."/>
            <person name="Federspiel N.A."/>
            <person name="Chibana H."/>
            <person name="Dungan J."/>
            <person name="Kalman S."/>
            <person name="Magee B.B."/>
            <person name="Newport G."/>
            <person name="Thorstenson Y.R."/>
            <person name="Agabian N."/>
            <person name="Magee P.T."/>
            <person name="Davis R.W."/>
            <person name="Scherer S."/>
        </authorList>
    </citation>
    <scope>NUCLEOTIDE SEQUENCE [LARGE SCALE GENOMIC DNA]</scope>
    <source>
        <strain>SC5314 / ATCC MYA-2876</strain>
    </source>
</reference>
<reference key="2">
    <citation type="journal article" date="2007" name="Genome Biol.">
        <title>Assembly of the Candida albicans genome into sixteen supercontigs aligned on the eight chromosomes.</title>
        <authorList>
            <person name="van het Hoog M."/>
            <person name="Rast T.J."/>
            <person name="Martchenko M."/>
            <person name="Grindle S."/>
            <person name="Dignard D."/>
            <person name="Hogues H."/>
            <person name="Cuomo C."/>
            <person name="Berriman M."/>
            <person name="Scherer S."/>
            <person name="Magee B.B."/>
            <person name="Whiteway M."/>
            <person name="Chibana H."/>
            <person name="Nantel A."/>
            <person name="Magee P.T."/>
        </authorList>
    </citation>
    <scope>GENOME REANNOTATION</scope>
    <source>
        <strain>SC5314 / ATCC MYA-2876</strain>
    </source>
</reference>
<reference key="3">
    <citation type="journal article" date="2013" name="Genome Biol.">
        <title>Assembly of a phased diploid Candida albicans genome facilitates allele-specific measurements and provides a simple model for repeat and indel structure.</title>
        <authorList>
            <person name="Muzzey D."/>
            <person name="Schwartz K."/>
            <person name="Weissman J.S."/>
            <person name="Sherlock G."/>
        </authorList>
    </citation>
    <scope>NUCLEOTIDE SEQUENCE [LARGE SCALE GENOMIC DNA]</scope>
    <scope>GENOME REANNOTATION</scope>
    <source>
        <strain>SC5314 / ATCC MYA-2876</strain>
    </source>
</reference>
<reference key="4">
    <citation type="journal article" date="2003" name="Trends Biochem. Sci.">
        <title>An eight-cysteine-containing CFEM domain unique to a group of fungal membrane proteins.</title>
        <authorList>
            <person name="Kulkarni R.D."/>
            <person name="Kelkar H.S."/>
            <person name="Dean R.A."/>
        </authorList>
    </citation>
    <scope>DOMAIN</scope>
</reference>
<reference key="5">
    <citation type="journal article" date="2003" name="Yeast">
        <title>Genome-wide identification of fungal GPI proteins.</title>
        <authorList>
            <person name="De Groot P.W."/>
            <person name="Hellingwerf K.J."/>
            <person name="Klis F.M."/>
        </authorList>
    </citation>
    <scope>PREDICTION OF GPI-ANCHOR</scope>
</reference>
<reference key="6">
    <citation type="journal article" date="2004" name="Mol. Microbiol.">
        <title>Transcriptional profiling in Candida albicans reveals new adaptive responses to extracellular pH and functions for Rim101p.</title>
        <authorList>
            <person name="Bensen E.S."/>
            <person name="Martin S.J."/>
            <person name="Li M."/>
            <person name="Berman J."/>
            <person name="Davis D.A."/>
        </authorList>
    </citation>
    <scope>INDUCTION</scope>
</reference>
<reference key="7">
    <citation type="journal article" date="2005" name="Eukaryot. Cell">
        <title>Genome-wide transcription profiling of the early phase of biofilm formation by Candida albicans.</title>
        <authorList>
            <person name="Murillo L.A."/>
            <person name="Newport G."/>
            <person name="Lan C.Y."/>
            <person name="Habelitz S."/>
            <person name="Dungan J."/>
            <person name="Agabian N.M."/>
        </authorList>
    </citation>
    <scope>INDUCTION</scope>
</reference>
<reference key="8">
    <citation type="journal article" date="2005" name="J. Antimicrob. Chemother.">
        <title>Genome-wide expression profiling of the response to ciclopirox olamine in Candida albicans.</title>
        <authorList>
            <person name="Lee R.E."/>
            <person name="Liu T.T."/>
            <person name="Barker K.S."/>
            <person name="Lee R.E."/>
            <person name="Rogers P.D."/>
        </authorList>
    </citation>
    <scope>INDUCTION</scope>
</reference>
<reference key="9">
    <citation type="journal article" date="2005" name="Mol. Biol. Cell">
        <title>Transcriptional response of Candida albicans to nitric oxide and the role of the YHB1 gene in nitrosative stress and virulence.</title>
        <authorList>
            <person name="Hromatka B.S."/>
            <person name="Noble S.M."/>
            <person name="Johnson A.D."/>
        </authorList>
    </citation>
    <scope>INDUCTION</scope>
</reference>
<reference key="10">
    <citation type="journal article" date="2006" name="FEMS Yeast Res.">
        <title>An in vitro assay to study the transcriptional response during adherence of Candida albicans to different human epithelia.</title>
        <authorList>
            <person name="Sohn K."/>
            <person name="Senyurek I."/>
            <person name="Fertey J."/>
            <person name="Konigsdorfer A."/>
            <person name="Joffroy C."/>
            <person name="Hauser N."/>
            <person name="Zelt G."/>
            <person name="Brunner H."/>
            <person name="Rupp S."/>
        </authorList>
    </citation>
    <scope>INDUCTION</scope>
</reference>
<reference key="11">
    <citation type="journal article" date="2006" name="Fungal Genet. Biol.">
        <title>Genomic response programs of Candida albicans following protoplasting and regeneration.</title>
        <authorList>
            <person name="Castillo L."/>
            <person name="Martinez A.I."/>
            <person name="Garcera A."/>
            <person name="Garcia-Martinez J."/>
            <person name="Ruiz-Herrera J."/>
            <person name="Valentin E."/>
            <person name="Sentandreu R."/>
        </authorList>
    </citation>
    <scope>INDUCTION</scope>
</reference>
<reference key="12">
    <citation type="journal article" date="2010" name="Eukaryot. Cell">
        <title>Adaptations of Candida albicans for growth in the mammalian intestinal tract.</title>
        <authorList>
            <person name="Rosenbach A."/>
            <person name="Dignard D."/>
            <person name="Pierce J.V."/>
            <person name="Whiteway M."/>
            <person name="Kumamoto C.A."/>
        </authorList>
    </citation>
    <scope>INDUCTION</scope>
</reference>
<reference key="13">
    <citation type="journal article" date="2010" name="Eukaryot. Cell">
        <title>Regulation of the hypoxic response in Candida albicans.</title>
        <authorList>
            <person name="Synnott J.M."/>
            <person name="Guida A."/>
            <person name="Mulhern-Haughey S."/>
            <person name="Higgins D.G."/>
            <person name="Butler G."/>
        </authorList>
    </citation>
    <scope>INDUCTION</scope>
</reference>
<reference key="14">
    <citation type="journal article" date="2011" name="Eukaryot. Cell">
        <title>Effects of fluconazole on the secretome, the wall proteome, and wall integrity of the clinical fungus Candida albicans.</title>
        <authorList>
            <person name="Sorgo A.G."/>
            <person name="Heilmann C.J."/>
            <person name="Dekker H.L."/>
            <person name="Bekker M."/>
            <person name="Brul S."/>
            <person name="de Koster C.G."/>
            <person name="de Koning L.J."/>
            <person name="Klis F.M."/>
        </authorList>
    </citation>
    <scope>INDUCTION</scope>
</reference>
<reference key="15">
    <citation type="journal article" date="2011" name="J. Biol. Chem.">
        <title>Cap2-HAP complex is a critical transcriptional regulator that has dual but contrasting roles in regulation of iron homeostasis in Candida albicans.</title>
        <authorList>
            <person name="Singh R.P."/>
            <person name="Prasad H.K."/>
            <person name="Sinha I."/>
            <person name="Agarwal N."/>
            <person name="Natarajan K."/>
        </authorList>
    </citation>
    <scope>INDUCTION</scope>
</reference>
<reference key="16">
    <citation type="journal article" date="2011" name="PLoS ONE">
        <title>Conserved and divergent roles of Bcr1 and CFEM proteins in Candida parapsilosis and Candida albicans.</title>
        <authorList>
            <person name="Ding C."/>
            <person name="Vidanes G.M."/>
            <person name="Maguire S.L."/>
            <person name="Guida A."/>
            <person name="Synnott J.M."/>
            <person name="Andes D.R."/>
            <person name="Butler G."/>
        </authorList>
    </citation>
    <scope>INDUCTION</scope>
    <scope>DOMAIN</scope>
</reference>
<reference key="17">
    <citation type="journal article" date="2014" name="PLoS Pathog.">
        <title>A relay network of extracellular heme-binding proteins drives C. albicans iron acquisition from hemoglobin.</title>
        <authorList>
            <person name="Kuznets G."/>
            <person name="Vigonsky E."/>
            <person name="Weissman Z."/>
            <person name="Lalli D."/>
            <person name="Gildor T."/>
            <person name="Kauffman S.J."/>
            <person name="Turano P."/>
            <person name="Becker J."/>
            <person name="Lewinson O."/>
            <person name="Kornitzer D."/>
        </authorList>
    </citation>
    <scope>DISRUPTION PHENOTYPE</scope>
    <scope>FUNCTION</scope>
    <scope>SUBCELLULAR LOCATION</scope>
    <scope>HEME-BINDING</scope>
    <scope>DOMAIN</scope>
    <scope>MUTAGENESIS OF ASP-63</scope>
    <scope>INTERACTION WITH RBT5</scope>
</reference>
<reference key="18">
    <citation type="journal article" date="2016" name="Nat. Microbiol.">
        <title>Structural basis of haem-iron acquisition by fungal pathogens.</title>
        <authorList>
            <person name="Nasser L."/>
            <person name="Weissman Z."/>
            <person name="Pinsky M."/>
            <person name="Amartely H."/>
            <person name="Dvir H."/>
            <person name="Kornitzer D."/>
        </authorList>
    </citation>
    <scope>FUNCTION</scope>
    <scope>DISRUPTION PHENOTYPE</scope>
    <scope>MUTAGENESIS OF ASP-63</scope>
</reference>
<gene>
    <name evidence="20" type="primary">PGA7</name>
    <name evidence="21" type="synonym">CRW3</name>
    <name evidence="22" type="synonym">RBT6</name>
    <name type="ordered locus">CAALFM_C400120WA</name>
    <name type="ORF">CaO19.13080</name>
    <name type="ORF">CaO19.5635</name>
</gene>
<proteinExistence type="evidence at protein level"/>
<comment type="function">
    <text evidence="17 18">GPI-linked hyphal surface heme-binding protein involved in heme-iron utilization (PubMed:25275454, PubMed:27617569). Heme transfer occurs between PGA7, RBT5 and CSA2 supporting a model in which the 3 CFEM proteins cooperate in a heme-acquisition system and form a cross-cell wall heme-transfer cascade (PubMed:25275454, PubMed:27617569). The ability to acquire iron from host tissues is a major virulence factor of pathogenic microorganisms. Required for biofilm formation (PubMed:25275454).</text>
</comment>
<comment type="subunit">
    <text evidence="17">Interacts with RBT5.</text>
</comment>
<comment type="subcellular location">
    <subcellularLocation>
        <location evidence="17">Secreted</location>
        <location evidence="17">Cell wall</location>
    </subcellularLocation>
    <subcellularLocation>
        <location evidence="24">Cell membrane</location>
        <topology evidence="24">Lipid-anchor</topology>
        <topology evidence="24">GPI-anchor</topology>
    </subcellularLocation>
</comment>
<comment type="induction">
    <text evidence="6 7 8 9 10 11 12 13 14 15 16">Induced by hypoxia, ketoconazole, fluconazole, nitric oxide, ciclopirox olamine, during cell wall regeneration following protoplasting, during adhesion, and during biofilm formation. Regulated by UPC2, BCR1, HAP43, and RIM101.</text>
</comment>
<comment type="domain">
    <text evidence="1 5 16 17">The CFEM domain is involved in heme-binding and contains 8 cysteines and is found in proteins from several pathogenic fungi, including both human and plant pathogens (PubMed:12633989, PubMed:22145027, PubMed:25275454). The CFEM domain adopts a novel helical-basket fold that consists of six alpha-helices, and is uniquely stabilized by four disulfide bonds formed by its 8 signature cysteines (By similarity).</text>
</comment>
<comment type="PTM">
    <text evidence="24">The GPI-anchor is attached to the protein in the endoplasmic reticulum and serves to target the protein to the cell surface. There, the glucosamine-inositol phospholipid moiety is cleaved off and the GPI-modified mannoprotein is covalently attached via its lipidless GPI glycan remnant to the 1,6-beta-glucan of the outer cell wall layer.</text>
</comment>
<comment type="disruption phenotype">
    <text evidence="17 18">Leads to defects in hemoglobin utilization as sole source of iron and decreased virulence on a mouse model of systemic candidiasis.</text>
</comment>
<comment type="similarity">
    <text evidence="24">Belongs to the RBT5 family.</text>
</comment>
<evidence type="ECO:0000250" key="1">
    <source>
        <dbReference type="UniProtKB" id="Q5A0X8"/>
    </source>
</evidence>
<evidence type="ECO:0000255" key="2"/>
<evidence type="ECO:0000255" key="3">
    <source>
        <dbReference type="PROSITE-ProRule" id="PRU01356"/>
    </source>
</evidence>
<evidence type="ECO:0000256" key="4">
    <source>
        <dbReference type="SAM" id="MobiDB-lite"/>
    </source>
</evidence>
<evidence type="ECO:0000269" key="5">
    <source>
    </source>
</evidence>
<evidence type="ECO:0000269" key="6">
    <source>
    </source>
</evidence>
<evidence type="ECO:0000269" key="7">
    <source>
    </source>
</evidence>
<evidence type="ECO:0000269" key="8">
    <source>
    </source>
</evidence>
<evidence type="ECO:0000269" key="9">
    <source>
    </source>
</evidence>
<evidence type="ECO:0000269" key="10">
    <source>
    </source>
</evidence>
<evidence type="ECO:0000269" key="11">
    <source>
    </source>
</evidence>
<evidence type="ECO:0000269" key="12">
    <source>
    </source>
</evidence>
<evidence type="ECO:0000269" key="13">
    <source>
    </source>
</evidence>
<evidence type="ECO:0000269" key="14">
    <source>
    </source>
</evidence>
<evidence type="ECO:0000269" key="15">
    <source>
    </source>
</evidence>
<evidence type="ECO:0000269" key="16">
    <source>
    </source>
</evidence>
<evidence type="ECO:0000269" key="17">
    <source>
    </source>
</evidence>
<evidence type="ECO:0000269" key="18">
    <source>
    </source>
</evidence>
<evidence type="ECO:0000303" key="19">
    <source>
    </source>
</evidence>
<evidence type="ECO:0000303" key="20">
    <source>
    </source>
</evidence>
<evidence type="ECO:0000303" key="21">
    <source>
    </source>
</evidence>
<evidence type="ECO:0000303" key="22">
    <source>
    </source>
</evidence>
<evidence type="ECO:0000303" key="23">
    <source>
    </source>
</evidence>
<evidence type="ECO:0000305" key="24"/>
<protein>
    <recommendedName>
        <fullName evidence="23">GPI-anchored hemophore PGA7</fullName>
    </recommendedName>
    <alternativeName>
        <fullName evidence="20">Predicted GPI-anchored protein 7</fullName>
    </alternativeName>
    <alternativeName>
        <fullName evidence="22">Repressed by TUP1 protein 6</fullName>
    </alternativeName>
</protein>
<feature type="signal peptide" evidence="2">
    <location>
        <begin position="1"/>
        <end position="13"/>
    </location>
</feature>
<feature type="chain" id="PRO_0000424646" description="GPI-anchored hemophore PGA7">
    <location>
        <begin position="14"/>
        <end position="194"/>
    </location>
</feature>
<feature type="propeptide" id="PRO_0000424647" description="Removed in mature form" evidence="2">
    <location>
        <begin position="195"/>
        <end position="219"/>
    </location>
</feature>
<feature type="domain" description="CFEM" evidence="3 17 19">
    <location>
        <begin position="17"/>
        <end position="126"/>
    </location>
</feature>
<feature type="region of interest" description="Disordered" evidence="4">
    <location>
        <begin position="151"/>
        <end position="194"/>
    </location>
</feature>
<feature type="compositionally biased region" description="Low complexity" evidence="4">
    <location>
        <begin position="153"/>
        <end position="194"/>
    </location>
</feature>
<feature type="binding site" description="axial binding residue" evidence="3 18">
    <location>
        <position position="63"/>
    </location>
    <ligand>
        <name>heme</name>
        <dbReference type="ChEBI" id="CHEBI:30413"/>
    </ligand>
    <ligandPart>
        <name>Fe</name>
        <dbReference type="ChEBI" id="CHEBI:18248"/>
    </ligandPart>
</feature>
<feature type="lipid moiety-binding region" description="GPI-anchor amidated serine" evidence="2">
    <location>
        <position position="194"/>
    </location>
</feature>
<feature type="disulfide bond" evidence="3">
    <location>
        <begin position="45"/>
        <end position="85"/>
    </location>
</feature>
<feature type="disulfide bond" evidence="3">
    <location>
        <begin position="49"/>
        <end position="80"/>
    </location>
</feature>
<feature type="disulfide bond" evidence="3">
    <location>
        <begin position="59"/>
        <end position="66"/>
    </location>
</feature>
<feature type="disulfide bond" evidence="3">
    <location>
        <begin position="68"/>
        <end position="101"/>
    </location>
</feature>
<feature type="mutagenesis site" description="Abolishes heme-binding." evidence="17">
    <original>D</original>
    <variation>A</variation>
    <location>
        <position position="63"/>
    </location>
</feature>
<feature type="mutagenesis site" description="Impairs the heme transfer within the CFEM proteins cascade." evidence="18">
    <original>D</original>
    <variation>H</variation>
    <location>
        <position position="63"/>
    </location>
</feature>